<protein>
    <recommendedName>
        <fullName>Putative uncharacterized protein YPR126C</fullName>
    </recommendedName>
</protein>
<reference key="1">
    <citation type="journal article" date="1997" name="Nature">
        <title>The nucleotide sequence of Saccharomyces cerevisiae chromosome XVI.</title>
        <authorList>
            <person name="Bussey H."/>
            <person name="Storms R.K."/>
            <person name="Ahmed A."/>
            <person name="Albermann K."/>
            <person name="Allen E."/>
            <person name="Ansorge W."/>
            <person name="Araujo R."/>
            <person name="Aparicio A."/>
            <person name="Barrell B.G."/>
            <person name="Badcock K."/>
            <person name="Benes V."/>
            <person name="Botstein D."/>
            <person name="Bowman S."/>
            <person name="Brueckner M."/>
            <person name="Carpenter J."/>
            <person name="Cherry J.M."/>
            <person name="Chung E."/>
            <person name="Churcher C.M."/>
            <person name="Coster F."/>
            <person name="Davis K."/>
            <person name="Davis R.W."/>
            <person name="Dietrich F.S."/>
            <person name="Delius H."/>
            <person name="DiPaolo T."/>
            <person name="Dubois E."/>
            <person name="Duesterhoeft A."/>
            <person name="Duncan M."/>
            <person name="Floeth M."/>
            <person name="Fortin N."/>
            <person name="Friesen J.D."/>
            <person name="Fritz C."/>
            <person name="Goffeau A."/>
            <person name="Hall J."/>
            <person name="Hebling U."/>
            <person name="Heumann K."/>
            <person name="Hilbert H."/>
            <person name="Hillier L.W."/>
            <person name="Hunicke-Smith S."/>
            <person name="Hyman R.W."/>
            <person name="Johnston M."/>
            <person name="Kalman S."/>
            <person name="Kleine K."/>
            <person name="Komp C."/>
            <person name="Kurdi O."/>
            <person name="Lashkari D."/>
            <person name="Lew H."/>
            <person name="Lin A."/>
            <person name="Lin D."/>
            <person name="Louis E.J."/>
            <person name="Marathe R."/>
            <person name="Messenguy F."/>
            <person name="Mewes H.-W."/>
            <person name="Mirtipati S."/>
            <person name="Moestl D."/>
            <person name="Mueller-Auer S."/>
            <person name="Namath A."/>
            <person name="Nentwich U."/>
            <person name="Oefner P."/>
            <person name="Pearson D."/>
            <person name="Petel F.X."/>
            <person name="Pohl T.M."/>
            <person name="Purnelle B."/>
            <person name="Rajandream M.A."/>
            <person name="Rechmann S."/>
            <person name="Rieger M."/>
            <person name="Riles L."/>
            <person name="Roberts D."/>
            <person name="Schaefer M."/>
            <person name="Scharfe M."/>
            <person name="Scherens B."/>
            <person name="Schramm S."/>
            <person name="Schroeder M."/>
            <person name="Sdicu A.-M."/>
            <person name="Tettelin H."/>
            <person name="Urrestarazu L.A."/>
            <person name="Ushinsky S."/>
            <person name="Vierendeels F."/>
            <person name="Vissers S."/>
            <person name="Voss H."/>
            <person name="Walsh S.V."/>
            <person name="Wambutt R."/>
            <person name="Wang Y."/>
            <person name="Wedler E."/>
            <person name="Wedler H."/>
            <person name="Winnett E."/>
            <person name="Zhong W.-W."/>
            <person name="Zollner A."/>
            <person name="Vo D.H."/>
            <person name="Hani J."/>
        </authorList>
    </citation>
    <scope>NUCLEOTIDE SEQUENCE [LARGE SCALE GENOMIC DNA]</scope>
    <source>
        <strain>ATCC 204508 / S288c</strain>
    </source>
</reference>
<reference key="2">
    <citation type="journal article" date="2014" name="G3 (Bethesda)">
        <title>The reference genome sequence of Saccharomyces cerevisiae: Then and now.</title>
        <authorList>
            <person name="Engel S.R."/>
            <person name="Dietrich F.S."/>
            <person name="Fisk D.G."/>
            <person name="Binkley G."/>
            <person name="Balakrishnan R."/>
            <person name="Costanzo M.C."/>
            <person name="Dwight S.S."/>
            <person name="Hitz B.C."/>
            <person name="Karra K."/>
            <person name="Nash R.S."/>
            <person name="Weng S."/>
            <person name="Wong E.D."/>
            <person name="Lloyd P."/>
            <person name="Skrzypek M.S."/>
            <person name="Miyasato S.R."/>
            <person name="Simison M."/>
            <person name="Cherry J.M."/>
        </authorList>
    </citation>
    <scope>GENOME REANNOTATION</scope>
    <source>
        <strain>ATCC 204508 / S288c</strain>
    </source>
</reference>
<reference key="3">
    <citation type="journal article" date="2007" name="Genome Res.">
        <title>Approaching a complete repository of sequence-verified protein-encoding clones for Saccharomyces cerevisiae.</title>
        <authorList>
            <person name="Hu Y."/>
            <person name="Rolfs A."/>
            <person name="Bhullar B."/>
            <person name="Murthy T.V.S."/>
            <person name="Zhu C."/>
            <person name="Berger M.F."/>
            <person name="Camargo A.A."/>
            <person name="Kelley F."/>
            <person name="McCarron S."/>
            <person name="Jepson D."/>
            <person name="Richardson A."/>
            <person name="Raphael J."/>
            <person name="Moreira D."/>
            <person name="Taycher E."/>
            <person name="Zuo D."/>
            <person name="Mohr S."/>
            <person name="Kane M.F."/>
            <person name="Williamson J."/>
            <person name="Simpson A.J.G."/>
            <person name="Bulyk M.L."/>
            <person name="Harlow E."/>
            <person name="Marsischky G."/>
            <person name="Kolodner R.D."/>
            <person name="LaBaer J."/>
        </authorList>
    </citation>
    <scope>NUCLEOTIDE SEQUENCE [GENOMIC DNA]</scope>
    <source>
        <strain>ATCC 204508 / S288c</strain>
    </source>
</reference>
<sequence length="102" mass="11585">MLARVAESVSCGLMGQVKTGLLLFDGSGFSDRLGVMRFYVWSSRIYVLVLVVQAQLILDAHNGVLFLLLFFLHNFFLLPQLFQFLLSGCLIFLNDVYFNLMV</sequence>
<name>YP126_YEAST</name>
<accession>O13567</accession>
<proteinExistence type="uncertain"/>
<keyword id="KW-0472">Membrane</keyword>
<keyword id="KW-0812">Transmembrane</keyword>
<keyword id="KW-1133">Transmembrane helix</keyword>
<evidence type="ECO:0000255" key="1"/>
<evidence type="ECO:0000305" key="2"/>
<evidence type="ECO:0000305" key="3">
    <source>
    </source>
</evidence>
<gene>
    <name type="ordered locus">YPR126C</name>
    <name type="ORF">P9642.2B</name>
</gene>
<organism>
    <name type="scientific">Saccharomyces cerevisiae (strain ATCC 204508 / S288c)</name>
    <name type="common">Baker's yeast</name>
    <dbReference type="NCBI Taxonomy" id="559292"/>
    <lineage>
        <taxon>Eukaryota</taxon>
        <taxon>Fungi</taxon>
        <taxon>Dikarya</taxon>
        <taxon>Ascomycota</taxon>
        <taxon>Saccharomycotina</taxon>
        <taxon>Saccharomycetes</taxon>
        <taxon>Saccharomycetales</taxon>
        <taxon>Saccharomycetaceae</taxon>
        <taxon>Saccharomyces</taxon>
    </lineage>
</organism>
<feature type="chain" id="PRO_0000299826" description="Putative uncharacterized protein YPR126C">
    <location>
        <begin position="1"/>
        <end position="102"/>
    </location>
</feature>
<feature type="transmembrane region" description="Helical" evidence="1">
    <location>
        <begin position="38"/>
        <end position="58"/>
    </location>
</feature>
<feature type="transmembrane region" description="Helical" evidence="1">
    <location>
        <begin position="64"/>
        <end position="84"/>
    </location>
</feature>
<dbReference type="EMBL" id="U40828">
    <property type="protein sequence ID" value="AAB68068.1"/>
    <property type="molecule type" value="Genomic_DNA"/>
</dbReference>
<dbReference type="EMBL" id="AY558368">
    <property type="protein sequence ID" value="AAS56694.1"/>
    <property type="molecule type" value="Genomic_DNA"/>
</dbReference>
<dbReference type="PIR" id="S69463">
    <property type="entry name" value="S69463"/>
</dbReference>
<dbReference type="DIP" id="DIP-4394N"/>
<dbReference type="STRING" id="4932.YPR126C"/>
<dbReference type="PaxDb" id="4932-YPR126C"/>
<dbReference type="EnsemblFungi" id="YPR126C_mRNA">
    <property type="protein sequence ID" value="YPR126C"/>
    <property type="gene ID" value="YPR126C"/>
</dbReference>
<dbReference type="AGR" id="SGD:S000006330"/>
<dbReference type="SGD" id="S000006330">
    <property type="gene designation" value="YPR126C"/>
</dbReference>
<dbReference type="HOGENOM" id="CLU_2279655_0_0_1"/>
<dbReference type="GO" id="GO:0016020">
    <property type="term" value="C:membrane"/>
    <property type="evidence" value="ECO:0007669"/>
    <property type="project" value="UniProtKB-SubCell"/>
</dbReference>
<comment type="subcellular location">
    <subcellularLocation>
        <location evidence="2">Membrane</location>
        <topology evidence="2">Multi-pass membrane protein</topology>
    </subcellularLocation>
</comment>
<comment type="miscellaneous">
    <text evidence="2">Almost completely overlaps YLH47.</text>
</comment>
<comment type="caution">
    <text evidence="3">Product of a dubious gene prediction unlikely to encode a functional protein. Because of that it is not part of the S.cerevisiae S288c complete/reference proteome set.</text>
</comment>